<gene>
    <name type="primary">yahC</name>
    <name type="ordered locus">b0317</name>
    <name type="ordered locus">JW0309</name>
</gene>
<comment type="subcellular location">
    <subcellularLocation>
        <location evidence="2">Cell membrane</location>
        <topology evidence="2">Multi-pass membrane protein</topology>
    </subcellularLocation>
</comment>
<comment type="similarity">
    <text evidence="2">To E.coli YcdZ.</text>
</comment>
<organism>
    <name type="scientific">Escherichia coli (strain K12)</name>
    <dbReference type="NCBI Taxonomy" id="83333"/>
    <lineage>
        <taxon>Bacteria</taxon>
        <taxon>Pseudomonadati</taxon>
        <taxon>Pseudomonadota</taxon>
        <taxon>Gammaproteobacteria</taxon>
        <taxon>Enterobacterales</taxon>
        <taxon>Enterobacteriaceae</taxon>
        <taxon>Escherichia</taxon>
    </lineage>
</organism>
<feature type="chain" id="PRO_0000168574" description="Uncharacterized protein YahC">
    <location>
        <begin position="1"/>
        <end position="165"/>
    </location>
</feature>
<feature type="transmembrane region" description="Helical" evidence="1">
    <location>
        <begin position="30"/>
        <end position="50"/>
    </location>
</feature>
<feature type="transmembrane region" description="Helical" evidence="1">
    <location>
        <begin position="65"/>
        <end position="85"/>
    </location>
</feature>
<feature type="transmembrane region" description="Helical" evidence="1">
    <location>
        <begin position="86"/>
        <end position="106"/>
    </location>
</feature>
<feature type="transmembrane region" description="Helical" evidence="1">
    <location>
        <begin position="108"/>
        <end position="128"/>
    </location>
</feature>
<feature type="transmembrane region" description="Helical" evidence="1">
    <location>
        <begin position="131"/>
        <end position="151"/>
    </location>
</feature>
<protein>
    <recommendedName>
        <fullName>Uncharacterized protein YahC</fullName>
    </recommendedName>
</protein>
<reference key="1">
    <citation type="submission" date="1997-01" db="EMBL/GenBank/DDBJ databases">
        <title>Sequence of minutes 4-25 of Escherichia coli.</title>
        <authorList>
            <person name="Chung E."/>
            <person name="Allen E."/>
            <person name="Araujo R."/>
            <person name="Aparicio A.M."/>
            <person name="Davis K."/>
            <person name="Duncan M."/>
            <person name="Federspiel N."/>
            <person name="Hyman R."/>
            <person name="Kalman S."/>
            <person name="Komp C."/>
            <person name="Kurdi O."/>
            <person name="Lew H."/>
            <person name="Lin D."/>
            <person name="Namath A."/>
            <person name="Oefner P."/>
            <person name="Roberts D."/>
            <person name="Schramm S."/>
            <person name="Davis R.W."/>
        </authorList>
    </citation>
    <scope>NUCLEOTIDE SEQUENCE [LARGE SCALE GENOMIC DNA]</scope>
    <source>
        <strain>K12 / MG1655 / ATCC 47076</strain>
    </source>
</reference>
<reference key="2">
    <citation type="journal article" date="1997" name="Science">
        <title>The complete genome sequence of Escherichia coli K-12.</title>
        <authorList>
            <person name="Blattner F.R."/>
            <person name="Plunkett G. III"/>
            <person name="Bloch C.A."/>
            <person name="Perna N.T."/>
            <person name="Burland V."/>
            <person name="Riley M."/>
            <person name="Collado-Vides J."/>
            <person name="Glasner J.D."/>
            <person name="Rode C.K."/>
            <person name="Mayhew G.F."/>
            <person name="Gregor J."/>
            <person name="Davis N.W."/>
            <person name="Kirkpatrick H.A."/>
            <person name="Goeden M.A."/>
            <person name="Rose D.J."/>
            <person name="Mau B."/>
            <person name="Shao Y."/>
        </authorList>
    </citation>
    <scope>NUCLEOTIDE SEQUENCE [LARGE SCALE GENOMIC DNA]</scope>
    <source>
        <strain>K12 / MG1655 / ATCC 47076</strain>
    </source>
</reference>
<reference key="3">
    <citation type="journal article" date="2006" name="Mol. Syst. Biol.">
        <title>Highly accurate genome sequences of Escherichia coli K-12 strains MG1655 and W3110.</title>
        <authorList>
            <person name="Hayashi K."/>
            <person name="Morooka N."/>
            <person name="Yamamoto Y."/>
            <person name="Fujita K."/>
            <person name="Isono K."/>
            <person name="Choi S."/>
            <person name="Ohtsubo E."/>
            <person name="Baba T."/>
            <person name="Wanner B.L."/>
            <person name="Mori H."/>
            <person name="Horiuchi T."/>
        </authorList>
    </citation>
    <scope>NUCLEOTIDE SEQUENCE [LARGE SCALE GENOMIC DNA]</scope>
    <source>
        <strain>K12 / W3110 / ATCC 27325 / DSM 5911</strain>
    </source>
</reference>
<sequence>MNGLTATGVTVGICAGLWQLVSSHVGLSQGWELLGTIGFVAFCSFYAAGGGKSGFIRSLAVNYSGMVWAFFAALTAGWLASVSGLSAFWASVITTVPFSAVVVWQGRFWLLSFIPGGFLGMTLFFASGMNWTVTLLGFLAGNCVGVISEYGGQKLSEATTKRDGY</sequence>
<evidence type="ECO:0000255" key="1"/>
<evidence type="ECO:0000305" key="2"/>
<dbReference type="EMBL" id="U73857">
    <property type="protein sequence ID" value="AAB18043.1"/>
    <property type="molecule type" value="Genomic_DNA"/>
</dbReference>
<dbReference type="EMBL" id="U00096">
    <property type="protein sequence ID" value="AAC73420.1"/>
    <property type="molecule type" value="Genomic_DNA"/>
</dbReference>
<dbReference type="EMBL" id="AP009048">
    <property type="protein sequence ID" value="BAE76100.1"/>
    <property type="molecule type" value="Genomic_DNA"/>
</dbReference>
<dbReference type="PIR" id="E64758">
    <property type="entry name" value="E64758"/>
</dbReference>
<dbReference type="RefSeq" id="NP_414851.1">
    <property type="nucleotide sequence ID" value="NC_000913.3"/>
</dbReference>
<dbReference type="RefSeq" id="WP_001013892.1">
    <property type="nucleotide sequence ID" value="NZ_SSZK01000075.1"/>
</dbReference>
<dbReference type="BioGRID" id="4262805">
    <property type="interactions" value="5"/>
</dbReference>
<dbReference type="FunCoup" id="P77219">
    <property type="interactions" value="556"/>
</dbReference>
<dbReference type="STRING" id="511145.b0317"/>
<dbReference type="PaxDb" id="511145-b0317"/>
<dbReference type="EnsemblBacteria" id="AAC73420">
    <property type="protein sequence ID" value="AAC73420"/>
    <property type="gene ID" value="b0317"/>
</dbReference>
<dbReference type="GeneID" id="947337"/>
<dbReference type="KEGG" id="ecj:JW0309"/>
<dbReference type="KEGG" id="eco:b0317"/>
<dbReference type="KEGG" id="ecoc:C3026_01555"/>
<dbReference type="KEGG" id="ecoc:C3026_24725"/>
<dbReference type="PATRIC" id="fig|1411691.4.peg.1960"/>
<dbReference type="EchoBASE" id="EB3357"/>
<dbReference type="eggNOG" id="ENOG502ZCC8">
    <property type="taxonomic scope" value="Bacteria"/>
</dbReference>
<dbReference type="HOGENOM" id="CLU_1616084_0_0_6"/>
<dbReference type="InParanoid" id="P77219"/>
<dbReference type="OMA" id="NCVGFIS"/>
<dbReference type="OrthoDB" id="6623141at2"/>
<dbReference type="PhylomeDB" id="P77219"/>
<dbReference type="BioCyc" id="EcoCyc:G6182-MONOMER"/>
<dbReference type="PRO" id="PR:P77219"/>
<dbReference type="Proteomes" id="UP000000625">
    <property type="component" value="Chromosome"/>
</dbReference>
<dbReference type="GO" id="GO:0005886">
    <property type="term" value="C:plasma membrane"/>
    <property type="evidence" value="ECO:0000314"/>
    <property type="project" value="EcoCyc"/>
</dbReference>
<dbReference type="InterPro" id="IPR009476">
    <property type="entry name" value="DUF1097"/>
</dbReference>
<dbReference type="Pfam" id="PF06496">
    <property type="entry name" value="DUF1097"/>
    <property type="match status" value="1"/>
</dbReference>
<name>YAHC_ECOLI</name>
<accession>P77219</accession>
<accession>Q2MCA6</accession>
<keyword id="KW-1003">Cell membrane</keyword>
<keyword id="KW-0472">Membrane</keyword>
<keyword id="KW-1185">Reference proteome</keyword>
<keyword id="KW-0812">Transmembrane</keyword>
<keyword id="KW-1133">Transmembrane helix</keyword>
<proteinExistence type="predicted"/>